<proteinExistence type="inferred from homology"/>
<evidence type="ECO:0000255" key="1">
    <source>
        <dbReference type="HAMAP-Rule" id="MF_01167"/>
    </source>
</evidence>
<protein>
    <recommendedName>
        <fullName evidence="1">UDP-4-amino-4-deoxy-L-arabinose--oxoglutarate aminotransferase</fullName>
        <ecNumber evidence="1">2.6.1.87</ecNumber>
    </recommendedName>
    <alternativeName>
        <fullName evidence="1">UDP-(beta-L-threo-pentapyranosyl-4''-ulose diphosphate) aminotransferase</fullName>
        <shortName evidence="1">UDP-Ara4O aminotransferase</shortName>
    </alternativeName>
    <alternativeName>
        <fullName evidence="1">UDP-4-amino-4-deoxy-L-arabinose aminotransferase</fullName>
    </alternativeName>
</protein>
<sequence>MQDFLPFSRPAIGDAEISAVCDVLKSGWITTGPKNHELEQQFCDTFGCQHAVALCSATAGMHVTLLALGIGPGDEVITPSQTWVSTINIITLLGAEPVFVDVDPDTLMTSAELIAPLITANTKAIIPVHYAGAPVDLDPILALARRHGIAVIEDAAHAVGTRYRERWIGASGTAIFSFHAIKNLTCAEGGMLVTDDKALADKVRMLKFHGLGVDAFDRMSLGRKPQAEVITPGFKYNLADINAAIALVQLARLPELNAKRAELVARYQERLAGLPLAPLAVPGYPHLHTWHLFMVRVDPDRCGLDRDQLMQALQERGIGTGLHFRAAHTQKYYRERYPTLSLPHTEWNSSRLCTLPLFPDMTLADVDRVVAALIDILE</sequence>
<accession>A0KGY8</accession>
<keyword id="KW-0032">Aminotransferase</keyword>
<keyword id="KW-0046">Antibiotic resistance</keyword>
<keyword id="KW-0441">Lipid A biosynthesis</keyword>
<keyword id="KW-0444">Lipid biosynthesis</keyword>
<keyword id="KW-0443">Lipid metabolism</keyword>
<keyword id="KW-0448">Lipopolysaccharide biosynthesis</keyword>
<keyword id="KW-0663">Pyridoxal phosphate</keyword>
<keyword id="KW-1185">Reference proteome</keyword>
<keyword id="KW-0808">Transferase</keyword>
<feature type="chain" id="PRO_0000380520" description="UDP-4-amino-4-deoxy-L-arabinose--oxoglutarate aminotransferase">
    <location>
        <begin position="1"/>
        <end position="378"/>
    </location>
</feature>
<feature type="modified residue" description="N6-(pyridoxal phosphate)lysine" evidence="1">
    <location>
        <position position="182"/>
    </location>
</feature>
<gene>
    <name evidence="1" type="primary">arnB</name>
    <name type="ordered locus">AHA_0992</name>
</gene>
<reference key="1">
    <citation type="journal article" date="2006" name="J. Bacteriol.">
        <title>Genome sequence of Aeromonas hydrophila ATCC 7966T: jack of all trades.</title>
        <authorList>
            <person name="Seshadri R."/>
            <person name="Joseph S.W."/>
            <person name="Chopra A.K."/>
            <person name="Sha J."/>
            <person name="Shaw J."/>
            <person name="Graf J."/>
            <person name="Haft D.H."/>
            <person name="Wu M."/>
            <person name="Ren Q."/>
            <person name="Rosovitz M.J."/>
            <person name="Madupu R."/>
            <person name="Tallon L."/>
            <person name="Kim M."/>
            <person name="Jin S."/>
            <person name="Vuong H."/>
            <person name="Stine O.C."/>
            <person name="Ali A."/>
            <person name="Horneman A.J."/>
            <person name="Heidelberg J.F."/>
        </authorList>
    </citation>
    <scope>NUCLEOTIDE SEQUENCE [LARGE SCALE GENOMIC DNA]</scope>
    <source>
        <strain>ATCC 7966 / DSM 30187 / BCRC 13018 / CCUG 14551 / JCM 1027 / KCTC 2358 / NCIMB 9240 / NCTC 8049</strain>
    </source>
</reference>
<comment type="function">
    <text evidence="1">Catalyzes the conversion of UDP-4-keto-arabinose (UDP-Ara4O) to UDP-4-amino-4-deoxy-L-arabinose (UDP-L-Ara4N). The modified arabinose is attached to lipid A and is required for resistance to polymyxin and cationic antimicrobial peptides.</text>
</comment>
<comment type="catalytic activity">
    <reaction evidence="1">
        <text>UDP-4-amino-4-deoxy-beta-L-arabinose + 2-oxoglutarate = UDP-beta-L-threo-pentopyranos-4-ulose + L-glutamate</text>
        <dbReference type="Rhea" id="RHEA:24710"/>
        <dbReference type="ChEBI" id="CHEBI:16810"/>
        <dbReference type="ChEBI" id="CHEBI:29985"/>
        <dbReference type="ChEBI" id="CHEBI:58708"/>
        <dbReference type="ChEBI" id="CHEBI:58710"/>
        <dbReference type="EC" id="2.6.1.87"/>
    </reaction>
</comment>
<comment type="cofactor">
    <cofactor evidence="1">
        <name>pyridoxal 5'-phosphate</name>
        <dbReference type="ChEBI" id="CHEBI:597326"/>
    </cofactor>
</comment>
<comment type="pathway">
    <text evidence="1">Nucleotide-sugar biosynthesis; UDP-4-deoxy-4-formamido-beta-L-arabinose biosynthesis; UDP-4-deoxy-4-formamido-beta-L-arabinose from UDP-alpha-D-glucuronate: step 2/3.</text>
</comment>
<comment type="pathway">
    <text evidence="1">Bacterial outer membrane biogenesis; lipopolysaccharide biosynthesis.</text>
</comment>
<comment type="subunit">
    <text evidence="1">Homodimer.</text>
</comment>
<comment type="similarity">
    <text evidence="1">Belongs to the DegT/DnrJ/EryC1 family. ArnB subfamily.</text>
</comment>
<organism>
    <name type="scientific">Aeromonas hydrophila subsp. hydrophila (strain ATCC 7966 / DSM 30187 / BCRC 13018 / CCUG 14551 / JCM 1027 / KCTC 2358 / NCIMB 9240 / NCTC 8049)</name>
    <dbReference type="NCBI Taxonomy" id="380703"/>
    <lineage>
        <taxon>Bacteria</taxon>
        <taxon>Pseudomonadati</taxon>
        <taxon>Pseudomonadota</taxon>
        <taxon>Gammaproteobacteria</taxon>
        <taxon>Aeromonadales</taxon>
        <taxon>Aeromonadaceae</taxon>
        <taxon>Aeromonas</taxon>
    </lineage>
</organism>
<name>ARNB_AERHH</name>
<dbReference type="EC" id="2.6.1.87" evidence="1"/>
<dbReference type="EMBL" id="CP000462">
    <property type="protein sequence ID" value="ABK39145.1"/>
    <property type="molecule type" value="Genomic_DNA"/>
</dbReference>
<dbReference type="RefSeq" id="WP_011704927.1">
    <property type="nucleotide sequence ID" value="NC_008570.1"/>
</dbReference>
<dbReference type="RefSeq" id="YP_855538.1">
    <property type="nucleotide sequence ID" value="NC_008570.1"/>
</dbReference>
<dbReference type="SMR" id="A0KGY8"/>
<dbReference type="STRING" id="380703.AHA_0992"/>
<dbReference type="EnsemblBacteria" id="ABK39145">
    <property type="protein sequence ID" value="ABK39145"/>
    <property type="gene ID" value="AHA_0992"/>
</dbReference>
<dbReference type="GeneID" id="4487533"/>
<dbReference type="KEGG" id="aha:AHA_0992"/>
<dbReference type="PATRIC" id="fig|380703.7.peg.996"/>
<dbReference type="eggNOG" id="COG0399">
    <property type="taxonomic scope" value="Bacteria"/>
</dbReference>
<dbReference type="HOGENOM" id="CLU_033332_0_3_6"/>
<dbReference type="OrthoDB" id="9804264at2"/>
<dbReference type="UniPathway" id="UPA00030"/>
<dbReference type="UniPathway" id="UPA00032">
    <property type="reaction ID" value="UER00493"/>
</dbReference>
<dbReference type="Proteomes" id="UP000000756">
    <property type="component" value="Chromosome"/>
</dbReference>
<dbReference type="GO" id="GO:0016020">
    <property type="term" value="C:membrane"/>
    <property type="evidence" value="ECO:0007669"/>
    <property type="project" value="GOC"/>
</dbReference>
<dbReference type="GO" id="GO:0030170">
    <property type="term" value="F:pyridoxal phosphate binding"/>
    <property type="evidence" value="ECO:0007669"/>
    <property type="project" value="TreeGrafter"/>
</dbReference>
<dbReference type="GO" id="GO:0099620">
    <property type="term" value="F:UDP-4-amino-4-deoxy-L-arabinose aminotransferase"/>
    <property type="evidence" value="ECO:0007669"/>
    <property type="project" value="UniProtKB-EC"/>
</dbReference>
<dbReference type="GO" id="GO:0009245">
    <property type="term" value="P:lipid A biosynthetic process"/>
    <property type="evidence" value="ECO:0007669"/>
    <property type="project" value="UniProtKB-KW"/>
</dbReference>
<dbReference type="GO" id="GO:0009103">
    <property type="term" value="P:lipopolysaccharide biosynthetic process"/>
    <property type="evidence" value="ECO:0007669"/>
    <property type="project" value="UniProtKB-UniRule"/>
</dbReference>
<dbReference type="GO" id="GO:0046677">
    <property type="term" value="P:response to antibiotic"/>
    <property type="evidence" value="ECO:0007669"/>
    <property type="project" value="UniProtKB-KW"/>
</dbReference>
<dbReference type="CDD" id="cd00616">
    <property type="entry name" value="AHBA_syn"/>
    <property type="match status" value="1"/>
</dbReference>
<dbReference type="FunFam" id="3.40.640.10:FF:000040">
    <property type="entry name" value="UDP-4-amino-4-deoxy-L-arabinose--oxoglutarate aminotransferase"/>
    <property type="match status" value="1"/>
</dbReference>
<dbReference type="FunFam" id="3.90.1150.10:FF:000030">
    <property type="entry name" value="UDP-4-amino-4-deoxy-L-arabinose--oxoglutarate aminotransferase"/>
    <property type="match status" value="1"/>
</dbReference>
<dbReference type="Gene3D" id="3.90.1150.10">
    <property type="entry name" value="Aspartate Aminotransferase, domain 1"/>
    <property type="match status" value="1"/>
</dbReference>
<dbReference type="Gene3D" id="3.40.640.10">
    <property type="entry name" value="Type I PLP-dependent aspartate aminotransferase-like (Major domain)"/>
    <property type="match status" value="1"/>
</dbReference>
<dbReference type="HAMAP" id="MF_01167">
    <property type="entry name" value="ArnB_transfer"/>
    <property type="match status" value="1"/>
</dbReference>
<dbReference type="InterPro" id="IPR022850">
    <property type="entry name" value="ArnB_NH2Trfase"/>
</dbReference>
<dbReference type="InterPro" id="IPR000653">
    <property type="entry name" value="DegT/StrS_aminotransferase"/>
</dbReference>
<dbReference type="InterPro" id="IPR015424">
    <property type="entry name" value="PyrdxlP-dep_Trfase"/>
</dbReference>
<dbReference type="InterPro" id="IPR015421">
    <property type="entry name" value="PyrdxlP-dep_Trfase_major"/>
</dbReference>
<dbReference type="InterPro" id="IPR015422">
    <property type="entry name" value="PyrdxlP-dep_Trfase_small"/>
</dbReference>
<dbReference type="NCBIfam" id="NF008658">
    <property type="entry name" value="PRK11658.1"/>
    <property type="match status" value="1"/>
</dbReference>
<dbReference type="PANTHER" id="PTHR30244">
    <property type="entry name" value="TRANSAMINASE"/>
    <property type="match status" value="1"/>
</dbReference>
<dbReference type="PANTHER" id="PTHR30244:SF41">
    <property type="entry name" value="UDP-4-AMINO-4-DEOXY-L-ARABINOSE--OXOGLUTARATE AMINOTRANSFERASE"/>
    <property type="match status" value="1"/>
</dbReference>
<dbReference type="Pfam" id="PF01041">
    <property type="entry name" value="DegT_DnrJ_EryC1"/>
    <property type="match status" value="1"/>
</dbReference>
<dbReference type="PIRSF" id="PIRSF000390">
    <property type="entry name" value="PLP_StrS"/>
    <property type="match status" value="1"/>
</dbReference>
<dbReference type="SUPFAM" id="SSF53383">
    <property type="entry name" value="PLP-dependent transferases"/>
    <property type="match status" value="1"/>
</dbReference>